<accession>P67688</accession>
<accession>Q8XGI2</accession>
<organism>
    <name type="scientific">Salmonella typhimurium (strain LT2 / SGSC1412 / ATCC 700720)</name>
    <dbReference type="NCBI Taxonomy" id="99287"/>
    <lineage>
        <taxon>Bacteria</taxon>
        <taxon>Pseudomonadati</taxon>
        <taxon>Pseudomonadota</taxon>
        <taxon>Gammaproteobacteria</taxon>
        <taxon>Enterobacterales</taxon>
        <taxon>Enterobacteriaceae</taxon>
        <taxon>Salmonella</taxon>
    </lineage>
</organism>
<reference key="1">
    <citation type="journal article" date="2001" name="Nature">
        <title>Complete genome sequence of Salmonella enterica serovar Typhimurium LT2.</title>
        <authorList>
            <person name="McClelland M."/>
            <person name="Sanderson K.E."/>
            <person name="Spieth J."/>
            <person name="Clifton S.W."/>
            <person name="Latreille P."/>
            <person name="Courtney L."/>
            <person name="Porwollik S."/>
            <person name="Ali J."/>
            <person name="Dante M."/>
            <person name="Du F."/>
            <person name="Hou S."/>
            <person name="Layman D."/>
            <person name="Leonard S."/>
            <person name="Nguyen C."/>
            <person name="Scott K."/>
            <person name="Holmes A."/>
            <person name="Grewal N."/>
            <person name="Mulvaney E."/>
            <person name="Ryan E."/>
            <person name="Sun H."/>
            <person name="Florea L."/>
            <person name="Miller W."/>
            <person name="Stoneking T."/>
            <person name="Nhan M."/>
            <person name="Waterston R."/>
            <person name="Wilson R.K."/>
        </authorList>
    </citation>
    <scope>NUCLEOTIDE SEQUENCE [LARGE SCALE GENOMIC DNA]</scope>
    <source>
        <strain>LT2 / SGSC1412 / ATCC 700720</strain>
    </source>
</reference>
<feature type="chain" id="PRO_0000192298" description="Ribosomal protein L11 methyltransferase">
    <location>
        <begin position="1"/>
        <end position="293"/>
    </location>
</feature>
<feature type="binding site" evidence="1">
    <location>
        <position position="145"/>
    </location>
    <ligand>
        <name>S-adenosyl-L-methionine</name>
        <dbReference type="ChEBI" id="CHEBI:59789"/>
    </ligand>
</feature>
<feature type="binding site" evidence="1">
    <location>
        <position position="166"/>
    </location>
    <ligand>
        <name>S-adenosyl-L-methionine</name>
        <dbReference type="ChEBI" id="CHEBI:59789"/>
    </ligand>
</feature>
<feature type="binding site" evidence="1">
    <location>
        <position position="188"/>
    </location>
    <ligand>
        <name>S-adenosyl-L-methionine</name>
        <dbReference type="ChEBI" id="CHEBI:59789"/>
    </ligand>
</feature>
<feature type="binding site" evidence="1">
    <location>
        <position position="230"/>
    </location>
    <ligand>
        <name>S-adenosyl-L-methionine</name>
        <dbReference type="ChEBI" id="CHEBI:59789"/>
    </ligand>
</feature>
<dbReference type="EC" id="2.1.1.-" evidence="1"/>
<dbReference type="EMBL" id="AE006468">
    <property type="protein sequence ID" value="AAL22252.1"/>
    <property type="molecule type" value="Genomic_DNA"/>
</dbReference>
<dbReference type="RefSeq" id="NP_462293.1">
    <property type="nucleotide sequence ID" value="NC_003197.2"/>
</dbReference>
<dbReference type="RefSeq" id="WP_001145849.1">
    <property type="nucleotide sequence ID" value="NC_003197.2"/>
</dbReference>
<dbReference type="SMR" id="P67688"/>
<dbReference type="STRING" id="99287.STM3383"/>
<dbReference type="PaxDb" id="99287-STM3383"/>
<dbReference type="GeneID" id="1254906"/>
<dbReference type="KEGG" id="stm:STM3383"/>
<dbReference type="PATRIC" id="fig|99287.12.peg.3584"/>
<dbReference type="HOGENOM" id="CLU_049382_4_1_6"/>
<dbReference type="OMA" id="MYYEFFF"/>
<dbReference type="PhylomeDB" id="P67688"/>
<dbReference type="BioCyc" id="SENT99287:STM3383-MONOMER"/>
<dbReference type="Proteomes" id="UP000001014">
    <property type="component" value="Chromosome"/>
</dbReference>
<dbReference type="GO" id="GO:0005829">
    <property type="term" value="C:cytosol"/>
    <property type="evidence" value="ECO:0000318"/>
    <property type="project" value="GO_Central"/>
</dbReference>
<dbReference type="GO" id="GO:0016279">
    <property type="term" value="F:protein-lysine N-methyltransferase activity"/>
    <property type="evidence" value="ECO:0000318"/>
    <property type="project" value="GO_Central"/>
</dbReference>
<dbReference type="GO" id="GO:0032259">
    <property type="term" value="P:methylation"/>
    <property type="evidence" value="ECO:0007669"/>
    <property type="project" value="UniProtKB-KW"/>
</dbReference>
<dbReference type="CDD" id="cd02440">
    <property type="entry name" value="AdoMet_MTases"/>
    <property type="match status" value="1"/>
</dbReference>
<dbReference type="FunFam" id="3.40.50.150:FF:000021">
    <property type="entry name" value="Ribosomal protein L11 methyltransferase"/>
    <property type="match status" value="1"/>
</dbReference>
<dbReference type="Gene3D" id="3.40.50.150">
    <property type="entry name" value="Vaccinia Virus protein VP39"/>
    <property type="match status" value="1"/>
</dbReference>
<dbReference type="HAMAP" id="MF_00735">
    <property type="entry name" value="Methyltr_PrmA"/>
    <property type="match status" value="1"/>
</dbReference>
<dbReference type="InterPro" id="IPR050078">
    <property type="entry name" value="Ribosomal_L11_MeTrfase_PrmA"/>
</dbReference>
<dbReference type="InterPro" id="IPR004498">
    <property type="entry name" value="Ribosomal_PrmA_MeTrfase"/>
</dbReference>
<dbReference type="InterPro" id="IPR029063">
    <property type="entry name" value="SAM-dependent_MTases_sf"/>
</dbReference>
<dbReference type="NCBIfam" id="TIGR00406">
    <property type="entry name" value="prmA"/>
    <property type="match status" value="1"/>
</dbReference>
<dbReference type="PANTHER" id="PTHR43648">
    <property type="entry name" value="ELECTRON TRANSFER FLAVOPROTEIN BETA SUBUNIT LYSINE METHYLTRANSFERASE"/>
    <property type="match status" value="1"/>
</dbReference>
<dbReference type="PANTHER" id="PTHR43648:SF1">
    <property type="entry name" value="ELECTRON TRANSFER FLAVOPROTEIN BETA SUBUNIT LYSINE METHYLTRANSFERASE"/>
    <property type="match status" value="1"/>
</dbReference>
<dbReference type="Pfam" id="PF06325">
    <property type="entry name" value="PrmA"/>
    <property type="match status" value="1"/>
</dbReference>
<dbReference type="PIRSF" id="PIRSF000401">
    <property type="entry name" value="RPL11_MTase"/>
    <property type="match status" value="1"/>
</dbReference>
<dbReference type="SUPFAM" id="SSF53335">
    <property type="entry name" value="S-adenosyl-L-methionine-dependent methyltransferases"/>
    <property type="match status" value="1"/>
</dbReference>
<comment type="function">
    <text evidence="1">Methylates ribosomal protein L11.</text>
</comment>
<comment type="catalytic activity">
    <reaction evidence="1">
        <text>L-lysyl-[protein] + 3 S-adenosyl-L-methionine = N(6),N(6),N(6)-trimethyl-L-lysyl-[protein] + 3 S-adenosyl-L-homocysteine + 3 H(+)</text>
        <dbReference type="Rhea" id="RHEA:54192"/>
        <dbReference type="Rhea" id="RHEA-COMP:9752"/>
        <dbReference type="Rhea" id="RHEA-COMP:13826"/>
        <dbReference type="ChEBI" id="CHEBI:15378"/>
        <dbReference type="ChEBI" id="CHEBI:29969"/>
        <dbReference type="ChEBI" id="CHEBI:57856"/>
        <dbReference type="ChEBI" id="CHEBI:59789"/>
        <dbReference type="ChEBI" id="CHEBI:61961"/>
    </reaction>
</comment>
<comment type="subcellular location">
    <subcellularLocation>
        <location evidence="1">Cytoplasm</location>
    </subcellularLocation>
</comment>
<comment type="similarity">
    <text evidence="1">Belongs to the methyltransferase superfamily. PrmA family.</text>
</comment>
<name>PRMA_SALTY</name>
<proteinExistence type="inferred from homology"/>
<gene>
    <name evidence="1" type="primary">prmA</name>
    <name type="ordered locus">STM3383</name>
</gene>
<sequence>MPWIQLKLNTTGANAEELSDALMEAGAVSITFQDTHDTPVFEPLPGETRLWGDTDVIGLFDAETDMKDVVAILEQHPLLGAGFAHKIEQLEDKDWEREWMDNFHPMRFGERLWICPSWRDIPDENAVNVMLDPGLAFGTGTHPTTSLCLQWLDGLDLNGKTVIDFGCGSGILAIAALKLGAAKAIGIDIDPQAIQASRDNAERNGVSDRLELYLPKDQPEAMKADVVVANILAGPLRELAPLISVLPVEGGLLGLSGILASQAESVCDAYAELFTLDPVVEKEEWCRITGRKK</sequence>
<protein>
    <recommendedName>
        <fullName evidence="1">Ribosomal protein L11 methyltransferase</fullName>
        <shortName evidence="1">L11 Mtase</shortName>
        <ecNumber evidence="1">2.1.1.-</ecNumber>
    </recommendedName>
</protein>
<evidence type="ECO:0000255" key="1">
    <source>
        <dbReference type="HAMAP-Rule" id="MF_00735"/>
    </source>
</evidence>
<keyword id="KW-0963">Cytoplasm</keyword>
<keyword id="KW-0489">Methyltransferase</keyword>
<keyword id="KW-1185">Reference proteome</keyword>
<keyword id="KW-0949">S-adenosyl-L-methionine</keyword>
<keyword id="KW-0808">Transferase</keyword>